<accession>Q5RF26</accession>
<dbReference type="EMBL" id="CR857335">
    <property type="protein sequence ID" value="CAH89631.1"/>
    <property type="molecule type" value="mRNA"/>
</dbReference>
<dbReference type="RefSeq" id="NP_001127178.1">
    <property type="nucleotide sequence ID" value="NM_001133706.2"/>
</dbReference>
<dbReference type="SMR" id="Q5RF26"/>
<dbReference type="FunCoup" id="Q5RF26">
    <property type="interactions" value="2283"/>
</dbReference>
<dbReference type="STRING" id="9601.ENSPPYP00000014829"/>
<dbReference type="GeneID" id="100174230"/>
<dbReference type="KEGG" id="pon:100174230"/>
<dbReference type="CTD" id="4691"/>
<dbReference type="eggNOG" id="KOG0123">
    <property type="taxonomic scope" value="Eukaryota"/>
</dbReference>
<dbReference type="InParanoid" id="Q5RF26"/>
<dbReference type="OrthoDB" id="167718at2759"/>
<dbReference type="Proteomes" id="UP000001595">
    <property type="component" value="Unplaced"/>
</dbReference>
<dbReference type="GO" id="GO:0005737">
    <property type="term" value="C:cytoplasm"/>
    <property type="evidence" value="ECO:0007669"/>
    <property type="project" value="UniProtKB-SubCell"/>
</dbReference>
<dbReference type="GO" id="GO:0005730">
    <property type="term" value="C:nucleolus"/>
    <property type="evidence" value="ECO:0007669"/>
    <property type="project" value="UniProtKB-SubCell"/>
</dbReference>
<dbReference type="GO" id="GO:1990904">
    <property type="term" value="C:ribonucleoprotein complex"/>
    <property type="evidence" value="ECO:0000250"/>
    <property type="project" value="UniProtKB"/>
</dbReference>
<dbReference type="GO" id="GO:0003723">
    <property type="term" value="F:RNA binding"/>
    <property type="evidence" value="ECO:0000250"/>
    <property type="project" value="UniProtKB"/>
</dbReference>
<dbReference type="GO" id="GO:0042162">
    <property type="term" value="F:telomeric DNA binding"/>
    <property type="evidence" value="ECO:0000250"/>
    <property type="project" value="UniProtKB"/>
</dbReference>
<dbReference type="CDD" id="cd12403">
    <property type="entry name" value="RRM1_NCL"/>
    <property type="match status" value="1"/>
</dbReference>
<dbReference type="CDD" id="cd12404">
    <property type="entry name" value="RRM2_NCL"/>
    <property type="match status" value="1"/>
</dbReference>
<dbReference type="CDD" id="cd12405">
    <property type="entry name" value="RRM3_NCL"/>
    <property type="match status" value="1"/>
</dbReference>
<dbReference type="CDD" id="cd12406">
    <property type="entry name" value="RRM4_NCL"/>
    <property type="match status" value="1"/>
</dbReference>
<dbReference type="FunFam" id="3.30.70.330:FF:000278">
    <property type="entry name" value="Nucleolin"/>
    <property type="match status" value="1"/>
</dbReference>
<dbReference type="FunFam" id="3.30.70.330:FF:001072">
    <property type="entry name" value="Nucleolin"/>
    <property type="match status" value="1"/>
</dbReference>
<dbReference type="FunFam" id="3.30.70.330:FF:000264">
    <property type="entry name" value="nucleolin"/>
    <property type="match status" value="1"/>
</dbReference>
<dbReference type="FunFam" id="3.30.70.330:FF:000265">
    <property type="entry name" value="nucleolin isoform X1"/>
    <property type="match status" value="1"/>
</dbReference>
<dbReference type="Gene3D" id="3.30.70.330">
    <property type="match status" value="4"/>
</dbReference>
<dbReference type="InterPro" id="IPR034230">
    <property type="entry name" value="Nucleolin_RRM1"/>
</dbReference>
<dbReference type="InterPro" id="IPR034233">
    <property type="entry name" value="Nucleolin_RRM2"/>
</dbReference>
<dbReference type="InterPro" id="IPR034234">
    <property type="entry name" value="Nucleolin_RRM3"/>
</dbReference>
<dbReference type="InterPro" id="IPR034235">
    <property type="entry name" value="Nucleolin_RRM4"/>
</dbReference>
<dbReference type="InterPro" id="IPR012677">
    <property type="entry name" value="Nucleotide-bd_a/b_plait_sf"/>
</dbReference>
<dbReference type="InterPro" id="IPR035979">
    <property type="entry name" value="RBD_domain_sf"/>
</dbReference>
<dbReference type="InterPro" id="IPR000504">
    <property type="entry name" value="RRM_dom"/>
</dbReference>
<dbReference type="InterPro" id="IPR003954">
    <property type="entry name" value="RRM_dom_euk"/>
</dbReference>
<dbReference type="PANTHER" id="PTHR23236">
    <property type="entry name" value="EUKARYOTIC TRANSLATION INITIATION FACTOR 4B/4H"/>
    <property type="match status" value="1"/>
</dbReference>
<dbReference type="PANTHER" id="PTHR23236:SF119">
    <property type="entry name" value="NUCLEAR RNA-BINDING PROTEIN SART-3"/>
    <property type="match status" value="1"/>
</dbReference>
<dbReference type="Pfam" id="PF00076">
    <property type="entry name" value="RRM_1"/>
    <property type="match status" value="4"/>
</dbReference>
<dbReference type="SMART" id="SM00360">
    <property type="entry name" value="RRM"/>
    <property type="match status" value="4"/>
</dbReference>
<dbReference type="SMART" id="SM00361">
    <property type="entry name" value="RRM_1"/>
    <property type="match status" value="2"/>
</dbReference>
<dbReference type="SUPFAM" id="SSF54928">
    <property type="entry name" value="RNA-binding domain, RBD"/>
    <property type="match status" value="3"/>
</dbReference>
<dbReference type="PROSITE" id="PS50102">
    <property type="entry name" value="RRM"/>
    <property type="match status" value="4"/>
</dbReference>
<feature type="chain" id="PRO_0000223182" description="Nucleolin">
    <location>
        <begin position="1"/>
        <end position="712"/>
    </location>
</feature>
<feature type="repeat" description="1">
    <location>
        <begin position="58"/>
        <end position="65"/>
    </location>
</feature>
<feature type="repeat" description="2">
    <location>
        <begin position="75"/>
        <end position="82"/>
    </location>
</feature>
<feature type="repeat" description="3">
    <location>
        <begin position="83"/>
        <end position="90"/>
    </location>
</feature>
<feature type="repeat" description="4">
    <location>
        <begin position="91"/>
        <end position="98"/>
    </location>
</feature>
<feature type="repeat" description="5; truncated">
    <location>
        <begin position="99"/>
        <end position="104"/>
    </location>
</feature>
<feature type="repeat" description="6">
    <location>
        <begin position="105"/>
        <end position="112"/>
    </location>
</feature>
<feature type="repeat" description="7">
    <location>
        <begin position="120"/>
        <end position="127"/>
    </location>
</feature>
<feature type="repeat" description="8">
    <location>
        <begin position="128"/>
        <end position="135"/>
    </location>
</feature>
<feature type="domain" description="RRM 1" evidence="5">
    <location>
        <begin position="309"/>
        <end position="385"/>
    </location>
</feature>
<feature type="domain" description="RRM 2" evidence="5">
    <location>
        <begin position="395"/>
        <end position="468"/>
    </location>
</feature>
<feature type="domain" description="RRM 3" evidence="5">
    <location>
        <begin position="488"/>
        <end position="562"/>
    </location>
</feature>
<feature type="domain" description="RRM 4" evidence="5">
    <location>
        <begin position="574"/>
        <end position="649"/>
    </location>
</feature>
<feature type="region of interest" description="Disordered" evidence="6">
    <location>
        <begin position="1"/>
        <end position="305"/>
    </location>
</feature>
<feature type="region of interest" description="8 X 8 AA tandem repeats of X-T-P-X-K-K-X-X">
    <location>
        <begin position="58"/>
        <end position="135"/>
    </location>
</feature>
<feature type="region of interest" description="Disordered" evidence="6">
    <location>
        <begin position="642"/>
        <end position="712"/>
    </location>
</feature>
<feature type="compositionally biased region" description="Acidic residues" evidence="6">
    <location>
        <begin position="24"/>
        <end position="43"/>
    </location>
</feature>
<feature type="compositionally biased region" description="Low complexity" evidence="6">
    <location>
        <begin position="56"/>
        <end position="107"/>
    </location>
</feature>
<feature type="compositionally biased region" description="Low complexity" evidence="6">
    <location>
        <begin position="122"/>
        <end position="137"/>
    </location>
</feature>
<feature type="compositionally biased region" description="Acidic residues" evidence="6">
    <location>
        <begin position="145"/>
        <end position="171"/>
    </location>
</feature>
<feature type="compositionally biased region" description="Low complexity" evidence="6">
    <location>
        <begin position="172"/>
        <end position="183"/>
    </location>
</feature>
<feature type="compositionally biased region" description="Acidic residues" evidence="6">
    <location>
        <begin position="184"/>
        <end position="211"/>
    </location>
</feature>
<feature type="compositionally biased region" description="Acidic residues" evidence="6">
    <location>
        <begin position="234"/>
        <end position="274"/>
    </location>
</feature>
<feature type="compositionally biased region" description="Basic and acidic residues" evidence="6">
    <location>
        <begin position="275"/>
        <end position="302"/>
    </location>
</feature>
<feature type="compositionally biased region" description="Gly residues" evidence="6">
    <location>
        <begin position="652"/>
        <end position="698"/>
    </location>
</feature>
<feature type="compositionally biased region" description="Basic and acidic residues" evidence="6">
    <location>
        <begin position="699"/>
        <end position="712"/>
    </location>
</feature>
<feature type="modified residue" description="N6-acetyllysine" evidence="4">
    <location>
        <position position="9"/>
    </location>
</feature>
<feature type="modified residue" description="N6-acetyllysine" evidence="3">
    <location>
        <position position="15"/>
    </location>
</feature>
<feature type="modified residue" description="N6-acetyllysine" evidence="3">
    <location>
        <position position="16"/>
    </location>
</feature>
<feature type="modified residue" description="Phosphoserine" evidence="4">
    <location>
        <position position="28"/>
    </location>
</feature>
<feature type="modified residue" description="Phosphoserine" evidence="4">
    <location>
        <position position="34"/>
    </location>
</feature>
<feature type="modified residue" description="Phosphoserine" evidence="4">
    <location>
        <position position="41"/>
    </location>
</feature>
<feature type="modified residue" description="Phosphoserine" evidence="4">
    <location>
        <position position="42"/>
    </location>
</feature>
<feature type="modified residue" description="Phosphoserine" evidence="4">
    <location>
        <position position="67"/>
    </location>
</feature>
<feature type="modified residue" description="Phosphothreonine" evidence="4">
    <location>
        <position position="69"/>
    </location>
</feature>
<feature type="modified residue" description="Phosphothreonine" evidence="4">
    <location>
        <position position="76"/>
    </location>
</feature>
<feature type="modified residue" description="Phosphothreonine" evidence="4">
    <location>
        <position position="84"/>
    </location>
</feature>
<feature type="modified residue" description="Phosphothreonine" evidence="4">
    <location>
        <position position="92"/>
    </location>
</feature>
<feature type="modified residue" description="N6-acetyllysine" evidence="3">
    <location>
        <position position="96"/>
    </location>
</feature>
<feature type="modified residue" description="Phosphothreonine" evidence="4">
    <location>
        <position position="99"/>
    </location>
</feature>
<feature type="modified residue" description="N6-acetyllysine" evidence="4">
    <location>
        <position position="102"/>
    </location>
</feature>
<feature type="modified residue" description="Phosphothreonine" evidence="4">
    <location>
        <position position="106"/>
    </location>
</feature>
<feature type="modified residue" description="N6-acetyllysine" evidence="3">
    <location>
        <position position="109"/>
    </location>
</feature>
<feature type="modified residue" description="Phosphothreonine" evidence="4">
    <location>
        <position position="113"/>
    </location>
</feature>
<feature type="modified residue" description="N6-acetyllysine" evidence="4">
    <location>
        <position position="116"/>
    </location>
</feature>
<feature type="modified residue" description="Phosphothreonine" evidence="4">
    <location>
        <position position="121"/>
    </location>
</feature>
<feature type="modified residue" description="N6-acetyllysine" evidence="4">
    <location>
        <position position="124"/>
    </location>
</feature>
<feature type="modified residue" description="Phosphoserine" evidence="4">
    <location>
        <position position="145"/>
    </location>
</feature>
<feature type="modified residue" description="Phosphoserine" evidence="4">
    <location>
        <position position="153"/>
    </location>
</feature>
<feature type="modified residue" description="Phosphoserine" evidence="4">
    <location>
        <position position="184"/>
    </location>
</feature>
<feature type="modified residue" description="Phosphoserine" evidence="4">
    <location>
        <position position="206"/>
    </location>
</feature>
<feature type="modified residue" description="Phosphothreonine" evidence="4">
    <location>
        <position position="214"/>
    </location>
</feature>
<feature type="modified residue" description="Phosphothreonine" evidence="4">
    <location>
        <position position="303"/>
    </location>
</feature>
<feature type="modified residue" description="N6-acetyllysine" evidence="4">
    <location>
        <position position="320"/>
    </location>
</feature>
<feature type="modified residue" description="N6-acetyllysine" evidence="3">
    <location>
        <position position="350"/>
    </location>
</feature>
<feature type="modified residue" description="Phosphoserine" evidence="4">
    <location>
        <position position="358"/>
    </location>
</feature>
<feature type="modified residue" description="Phosphothreonine" evidence="4">
    <location>
        <position position="369"/>
    </location>
</feature>
<feature type="modified residue" description="N6-acetyllysine; alternate" evidence="4">
    <location>
        <position position="379"/>
    </location>
</feature>
<feature type="modified residue" description="N6-acetyllysine" evidence="4">
    <location>
        <position position="400"/>
    </location>
</feature>
<feature type="modified residue" description="N6-acetyllysine" evidence="4">
    <location>
        <position position="405"/>
    </location>
</feature>
<feature type="modified residue" description="Phosphothreonine" evidence="4">
    <location>
        <position position="407"/>
    </location>
</feature>
<feature type="modified residue" description="N6-acetyllysine" evidence="3">
    <location>
        <position position="429"/>
    </location>
</feature>
<feature type="modified residue" description="N6-acetyllysine" evidence="3">
    <location>
        <position position="446"/>
    </location>
</feature>
<feature type="modified residue" description="Phosphoserine" evidence="4">
    <location>
        <position position="460"/>
    </location>
</feature>
<feature type="modified residue" description="Phosphoserine" evidence="4">
    <location>
        <position position="462"/>
    </location>
</feature>
<feature type="modified residue" description="N6-acetyllysine" evidence="3">
    <location>
        <position position="469"/>
    </location>
</feature>
<feature type="modified residue" description="N6-acetyllysine" evidence="3">
    <location>
        <position position="479"/>
    </location>
</feature>
<feature type="modified residue" description="N6-acetyllysine; alternate" evidence="4">
    <location>
        <position position="515"/>
    </location>
</feature>
<feature type="modified residue" description="N6-acetyllysine" evidence="3">
    <location>
        <position position="523"/>
    </location>
</feature>
<feature type="modified residue" description="Phosphoserine" evidence="4">
    <location>
        <position position="565"/>
    </location>
</feature>
<feature type="modified residue" description="N6-acetyllysine" evidence="4">
    <location>
        <position position="574"/>
    </location>
</feature>
<feature type="modified residue" description="N6-acetyllysine; alternate" evidence="4">
    <location>
        <position position="579"/>
    </location>
</feature>
<feature type="modified residue" description="Phosphoserine" evidence="4">
    <location>
        <position position="582"/>
    </location>
</feature>
<feature type="modified residue" description="Phosphoserine" evidence="4">
    <location>
        <position position="593"/>
    </location>
</feature>
<feature type="modified residue" description="Phosphoserine" evidence="4">
    <location>
        <position position="621"/>
    </location>
</feature>
<feature type="modified residue" description="N6-acetyllysine" evidence="4">
    <location>
        <position position="648"/>
    </location>
</feature>
<feature type="modified residue" description="Asymmetric dimethylarginine" evidence="2">
    <location>
        <position position="658"/>
    </location>
</feature>
<feature type="modified residue" description="Asymmetric dimethylarginine" evidence="2">
    <location>
        <position position="662"/>
    </location>
</feature>
<feature type="modified residue" description="Asymmetric dimethylarginine" evidence="2">
    <location>
        <position position="668"/>
    </location>
</feature>
<feature type="modified residue" description="Asymmetric dimethylarginine" evidence="2">
    <location>
        <position position="672"/>
    </location>
</feature>
<feature type="modified residue" description="Asymmetric dimethylarginine" evidence="2">
    <location>
        <position position="675"/>
    </location>
</feature>
<feature type="modified residue" description="Asymmetric dimethylarginine" evidence="2">
    <location>
        <position position="681"/>
    </location>
</feature>
<feature type="modified residue" description="Asymmetric dimethylarginine" evidence="2">
    <location>
        <position position="683"/>
    </location>
</feature>
<feature type="modified residue" description="Asymmetric dimethylarginine" evidence="2">
    <location>
        <position position="689"/>
    </location>
</feature>
<feature type="modified residue" description="Asymmetric dimethylarginine" evidence="2">
    <location>
        <position position="693"/>
    </location>
</feature>
<feature type="modified residue" description="Asymmetric dimethylarginine; alternate" evidence="2">
    <location>
        <position position="696"/>
    </location>
</feature>
<feature type="modified residue" description="Omega-N-methylarginine; alternate" evidence="3">
    <location>
        <position position="696"/>
    </location>
</feature>
<feature type="cross-link" description="Glycyl lysine isopeptide (Lys-Gly) (interchain with G-Cter in SUMO1); alternate" evidence="4">
    <location>
        <position position="299"/>
    </location>
</feature>
<feature type="cross-link" description="Glycyl lysine isopeptide (Lys-Gly) (interchain with G-Cter in SUMO2); alternate" evidence="4">
    <location>
        <position position="299"/>
    </location>
</feature>
<feature type="cross-link" description="Glycyl lysine isopeptide (Lys-Gly) (interchain with G-Cter in SUMO1); alternate" evidence="4">
    <location>
        <position position="326"/>
    </location>
</feature>
<feature type="cross-link" description="Glycyl lysine isopeptide (Lys-Gly) (interchain with G-Cter in SUMO2); alternate" evidence="4">
    <location>
        <position position="326"/>
    </location>
</feature>
<feature type="cross-link" description="Glycyl lysine isopeptide (Lys-Gly) (interchain with G-Cter in SUMO2)" evidence="4">
    <location>
        <position position="372"/>
    </location>
</feature>
<feature type="cross-link" description="Glycyl lysine isopeptide (Lys-Gly) (interchain with G-Cter in SUMO2); alternate" evidence="4">
    <location>
        <position position="379"/>
    </location>
</feature>
<feature type="cross-link" description="Glycyl lysine isopeptide (Lys-Gly) (interchain with G-Cter in SUMO2); alternate" evidence="4">
    <location>
        <position position="515"/>
    </location>
</feature>
<feature type="cross-link" description="Glycyl lysine isopeptide (Lys-Gly) (interchain with G-Cter in SUMO2); alternate" evidence="4">
    <location>
        <position position="579"/>
    </location>
</feature>
<feature type="cross-link" description="Glycyl lysine isopeptide (Lys-Gly) (interchain with G-Cter in SUMO1); alternate" evidence="4">
    <location>
        <position position="591"/>
    </location>
</feature>
<feature type="cross-link" description="Glycyl lysine isopeptide (Lys-Gly) (interchain with G-Cter in SUMO2); alternate" evidence="4">
    <location>
        <position position="591"/>
    </location>
</feature>
<feature type="cross-link" description="Glycyl lysine isopeptide (Lys-Gly) (interchain with G-Cter in SUMO2)" evidence="4">
    <location>
        <position position="626"/>
    </location>
</feature>
<name>NUCL_PONAB</name>
<protein>
    <recommendedName>
        <fullName>Nucleolin</fullName>
    </recommendedName>
</protein>
<keyword id="KW-0007">Acetylation</keyword>
<keyword id="KW-0963">Cytoplasm</keyword>
<keyword id="KW-0238">DNA-binding</keyword>
<keyword id="KW-1017">Isopeptide bond</keyword>
<keyword id="KW-0488">Methylation</keyword>
<keyword id="KW-0539">Nucleus</keyword>
<keyword id="KW-0597">Phosphoprotein</keyword>
<keyword id="KW-1185">Reference proteome</keyword>
<keyword id="KW-0677">Repeat</keyword>
<keyword id="KW-0694">RNA-binding</keyword>
<keyword id="KW-0832">Ubl conjugation</keyword>
<proteinExistence type="evidence at transcript level"/>
<gene>
    <name type="primary">NCL</name>
</gene>
<reference key="1">
    <citation type="submission" date="2004-11" db="EMBL/GenBank/DDBJ databases">
        <authorList>
            <consortium name="The German cDNA consortium"/>
        </authorList>
    </citation>
    <scope>NUCLEOTIDE SEQUENCE [LARGE SCALE MRNA]</scope>
    <source>
        <tissue>Kidney</tissue>
    </source>
</reference>
<organism>
    <name type="scientific">Pongo abelii</name>
    <name type="common">Sumatran orangutan</name>
    <name type="synonym">Pongo pygmaeus abelii</name>
    <dbReference type="NCBI Taxonomy" id="9601"/>
    <lineage>
        <taxon>Eukaryota</taxon>
        <taxon>Metazoa</taxon>
        <taxon>Chordata</taxon>
        <taxon>Craniata</taxon>
        <taxon>Vertebrata</taxon>
        <taxon>Euteleostomi</taxon>
        <taxon>Mammalia</taxon>
        <taxon>Eutheria</taxon>
        <taxon>Euarchontoglires</taxon>
        <taxon>Primates</taxon>
        <taxon>Haplorrhini</taxon>
        <taxon>Catarrhini</taxon>
        <taxon>Hominidae</taxon>
        <taxon>Pongo</taxon>
    </lineage>
</organism>
<sequence>MVKLAKAGKNQGDPKKMAPPPKEVEEDSEDEEMSEDEEDDSSGEEVVIPQKKGKKAAATSAKKVVVSPTKKVAVATPAKKAAVTPGKKAAATPAKKTVTPAKAVTTPGKKGATPGKALVATPGKKGAAIPAKGAKNGKNAKKEDSDEEEEDDSEEDEDDDEDEDEDEDEIEPAAMKAAAAAPASEDEDDEDDEDDEDEDDDEEDDSEEEAMETTPAKGKKAAKVVPVKAKNVAEDEDEEEDDEDEDDDDDDDDDDEDDEDEDDEEEEEEEEEEPVKEAPGKRKKEMAKQKAAPEAKKQKVEGTEPTTAFNLFVGNLNFNKSAPELKTGISDVFAKNDLAVVDVRIGMTRKFGYVDFESAEDLEKALELTGLKVFGNEIKLEKPKGKDSKKERDARTLLAKNLPYKVTQDELKEVFEDAAEIRLVSKDGKSKGIAYIEFKTEADAEKTFEEKQGTEIDGRSISLYYTGEKGQNQDYRGGKNSTWSGESKTLVLSNLSYSATEETLQEVFEKATFIKVPQNQNGKSKGYAFIEFASFEDAKEALNSCNKREIEGRAIRLELQGPRGSPNARSQPSKTLFVKGLSEDTTEETLKESFDGSVRARIVTDRETGSSKGFGFVDFNSEEDAKAAKEAMEDGEIDGNKVTLDWAKPKGEGGFGGRGGGRGGFGGRGGGRGGRGGFGGRGRGGFGGRGGFRGGRGGGGDHKPQGKKTKFE</sequence>
<comment type="function">
    <text evidence="1">Nucleolin is the major nucleolar protein of growing eukaryotic cells. It is found associated with intranucleolar chromatin and pre-ribosomal particles. It induces chromatin decondensation by binding to histone H1. It is thought to play a role in pre-rRNA transcription and ribosome assembly. May play a role in the process of transcriptional elongation. Binds RNA oligonucleotides with 5'-UUAGGG-3' repeats more tightly than the telomeric single-stranded DNA 5'-TTAGGG-3' repeats (By similarity).</text>
</comment>
<comment type="subunit">
    <text evidence="3 4">Identified in a IGF2BP1-dependent mRNP granule complex containing untranslated mRNAs. Component of the SWAP complex that consists of NPM1, NCL/nucleolin, PARP1 and SWAP70. Component of a complex which is at least composed of HTATSF1/Tat-SF1, the P-TEFb complex components CDK9 and CCNT1, RNA polymerase II, SUPT5H, and NCL/nucleolin. Interacts with AICDA. Interacts with APTX. Interacts with C1QBP. Interacts with ERBB4. Interacts (via C-terminus) with FMR1 isoform 6 (via N-terminus). Interacts with GZF1; this interaction is important for nucleolar localization of GZF1. Interacts with NSUN2. Interacts with NVL. Interacts (via N-terminus domain) with SETX. Interacts (via RRM1 and C-terminal RRM4/Arg/Gly-rich domains) with TERT; the interaction is important for nucleolar localization of TERT. Interacts with WDR46. Interacts with ZFP36. Interacts with LRRC34. Interacts with RRP1B. Interacts with HNRNPU; this interaction occurs during mitosis. Interacts with RIOK1; RIOK1 recruits NCL to the PRMT5 for symmetrically methylation (By similarity). Interacts with ZBTB7B (By similarity). Interacts with MDK; this interaction promotes NCL clustering and lateral movements of this complex into lipid rafts leading to MDK internalization (By similarity). Interacts with HDGF (By similarity). Interacts with ALKBH2. Interacts with IGFBP5; this interaction is necessary for IGFBP5 localization to the nucleus (By similarity). Interacts with DDX24 (when ubiquitinated); this interaction may be important during ribosome biogenesis (By similarity).</text>
</comment>
<comment type="subcellular location">
    <subcellularLocation>
        <location evidence="4">Nucleus</location>
        <location evidence="4">Nucleolus</location>
    </subcellularLocation>
    <subcellularLocation>
        <location evidence="1">Cytoplasm</location>
    </subcellularLocation>
    <text evidence="1">Localized in cytoplasmic mRNP granules containing untranslated mRNAs.</text>
</comment>
<comment type="PTM">
    <text evidence="1">Some glutamate residues are glycylated by TTLL8. This modification occurs exclusively on glutamate residues and results in a glycine chain on the gamma-carboxyl group (By similarity).</text>
</comment>
<comment type="PTM">
    <text evidence="4">Symmetrically methylated by PRMT5 (By similarity).</text>
</comment>
<evidence type="ECO:0000250" key="1"/>
<evidence type="ECO:0000250" key="2">
    <source>
        <dbReference type="UniProtKB" id="P08199"/>
    </source>
</evidence>
<evidence type="ECO:0000250" key="3">
    <source>
        <dbReference type="UniProtKB" id="P09405"/>
    </source>
</evidence>
<evidence type="ECO:0000250" key="4">
    <source>
        <dbReference type="UniProtKB" id="P19338"/>
    </source>
</evidence>
<evidence type="ECO:0000255" key="5">
    <source>
        <dbReference type="PROSITE-ProRule" id="PRU00176"/>
    </source>
</evidence>
<evidence type="ECO:0000256" key="6">
    <source>
        <dbReference type="SAM" id="MobiDB-lite"/>
    </source>
</evidence>